<sequence>MGVPAVPEASSPRWGTLLLAIFLAASRGLVAAFKVTTPYSLYVCPEGQNATLTCRILGPVSKGHDVTIYKTWYLSSRGEVQMCKEHRPIRNFTLQHLQHHGSHLKANASHDQPQKHGLELASDHHGNFSITLRNVTPRDSGLYCCLVIELKNHHPEQRFYGSMELQVQAGKGSGSTCMASNEQDSDSITAAALATGACIVGILCLPLILLLVYKQRQVASHRRAQELVRMDSNTQGIENPGFETTPPFQGMPEAKTRPPLSYVAQRQPSESGRYLLSDPSTPLSPPGPGDVFFPSLDPVPDSPNSEAI</sequence>
<organism>
    <name type="scientific">Mus musculus</name>
    <name type="common">Mouse</name>
    <dbReference type="NCBI Taxonomy" id="10090"/>
    <lineage>
        <taxon>Eukaryota</taxon>
        <taxon>Metazoa</taxon>
        <taxon>Chordata</taxon>
        <taxon>Craniata</taxon>
        <taxon>Vertebrata</taxon>
        <taxon>Euteleostomi</taxon>
        <taxon>Mammalia</taxon>
        <taxon>Eutheria</taxon>
        <taxon>Euarchontoglires</taxon>
        <taxon>Glires</taxon>
        <taxon>Rodentia</taxon>
        <taxon>Myomorpha</taxon>
        <taxon>Muroidea</taxon>
        <taxon>Muridae</taxon>
        <taxon>Murinae</taxon>
        <taxon>Mus</taxon>
        <taxon>Mus</taxon>
    </lineage>
</organism>
<dbReference type="EMBL" id="AK014600">
    <property type="protein sequence ID" value="BAB29455.1"/>
    <property type="molecule type" value="mRNA"/>
</dbReference>
<dbReference type="EMBL" id="AK030479">
    <property type="protein sequence ID" value="BAC26981.1"/>
    <property type="molecule type" value="mRNA"/>
</dbReference>
<dbReference type="EMBL" id="AK032383">
    <property type="protein sequence ID" value="BAC27847.1"/>
    <property type="status" value="ALT_FRAME"/>
    <property type="molecule type" value="mRNA"/>
</dbReference>
<dbReference type="EMBL" id="AK079734">
    <property type="protein sequence ID" value="BAC37735.1"/>
    <property type="molecule type" value="mRNA"/>
</dbReference>
<dbReference type="EMBL" id="AK131118">
    <property type="protein sequence ID" value="BAD21368.1"/>
    <property type="status" value="ALT_INIT"/>
    <property type="molecule type" value="mRNA"/>
</dbReference>
<dbReference type="EMBL" id="BC003967">
    <property type="protein sequence ID" value="AAH03967.1"/>
    <property type="molecule type" value="mRNA"/>
</dbReference>
<dbReference type="EMBL" id="AC079082">
    <property type="status" value="NOT_ANNOTATED_CDS"/>
    <property type="molecule type" value="Genomic_DNA"/>
</dbReference>
<dbReference type="EMBL" id="EF426799">
    <property type="protein sequence ID" value="ABO15002.1"/>
    <property type="status" value="ALT_FRAME"/>
    <property type="molecule type" value="mRNA"/>
</dbReference>
<dbReference type="CCDS" id="CCDS48569.1"/>
<dbReference type="RefSeq" id="NP_001153044.1">
    <property type="nucleotide sequence ID" value="NM_001159572.1"/>
</dbReference>
<dbReference type="RefSeq" id="NP_083008.1">
    <property type="nucleotide sequence ID" value="NM_028732.4"/>
</dbReference>
<dbReference type="SMR" id="Q9D659"/>
<dbReference type="FunCoup" id="Q9D659">
    <property type="interactions" value="1360"/>
</dbReference>
<dbReference type="STRING" id="10090.ENSMUSP00000020301"/>
<dbReference type="BindingDB" id="Q9D659"/>
<dbReference type="ChEMBL" id="CHEMBL5465355"/>
<dbReference type="GlyCosmos" id="Q9D659">
    <property type="glycosylation" value="3 sites, No reported glycans"/>
</dbReference>
<dbReference type="GlyGen" id="Q9D659">
    <property type="glycosylation" value="3 sites, 3 N-linked glycans (3 sites)"/>
</dbReference>
<dbReference type="iPTMnet" id="Q9D659"/>
<dbReference type="PhosphoSitePlus" id="Q9D659"/>
<dbReference type="PaxDb" id="10090-ENSMUSP00000020301"/>
<dbReference type="ProteomicsDB" id="297923"/>
<dbReference type="ABCD" id="Q9D659">
    <property type="antibodies" value="4 sequenced antibodies"/>
</dbReference>
<dbReference type="Antibodypedia" id="2331">
    <property type="antibodies" value="517 antibodies from 29 providers"/>
</dbReference>
<dbReference type="DNASU" id="74048"/>
<dbReference type="Ensembl" id="ENSMUST00000105460.8">
    <property type="protein sequence ID" value="ENSMUSP00000101100.2"/>
    <property type="gene ID" value="ENSMUSG00000020101.15"/>
</dbReference>
<dbReference type="GeneID" id="74048"/>
<dbReference type="KEGG" id="mmu:74048"/>
<dbReference type="UCSC" id="uc007few.2">
    <property type="organism name" value="mouse"/>
</dbReference>
<dbReference type="UCSC" id="uc007fex.2">
    <property type="organism name" value="mouse"/>
</dbReference>
<dbReference type="AGR" id="MGI:1921298"/>
<dbReference type="CTD" id="64115"/>
<dbReference type="MGI" id="MGI:1921298">
    <property type="gene designation" value="Vsir"/>
</dbReference>
<dbReference type="VEuPathDB" id="HostDB:ENSMUSG00000020101"/>
<dbReference type="eggNOG" id="ENOG502QWBS">
    <property type="taxonomic scope" value="Eukaryota"/>
</dbReference>
<dbReference type="GeneTree" id="ENSGT00940000163256"/>
<dbReference type="InParanoid" id="Q9D659"/>
<dbReference type="OrthoDB" id="8910360at2759"/>
<dbReference type="TreeFam" id="TF332066"/>
<dbReference type="BioGRID-ORCS" id="74048">
    <property type="hits" value="2 hits in 48 CRISPR screens"/>
</dbReference>
<dbReference type="ChiTaRS" id="Vsir">
    <property type="organism name" value="mouse"/>
</dbReference>
<dbReference type="PRO" id="PR:Q9D659"/>
<dbReference type="Proteomes" id="UP000000589">
    <property type="component" value="Chromosome 10"/>
</dbReference>
<dbReference type="RNAct" id="Q9D659">
    <property type="molecule type" value="protein"/>
</dbReference>
<dbReference type="Bgee" id="ENSMUSG00000020101">
    <property type="expression patterns" value="Expressed in granulocyte and 225 other cell types or tissues"/>
</dbReference>
<dbReference type="ExpressionAtlas" id="Q9D659">
    <property type="expression patterns" value="baseline and differential"/>
</dbReference>
<dbReference type="GO" id="GO:0009897">
    <property type="term" value="C:external side of plasma membrane"/>
    <property type="evidence" value="ECO:0000314"/>
    <property type="project" value="MGI"/>
</dbReference>
<dbReference type="GO" id="GO:0005886">
    <property type="term" value="C:plasma membrane"/>
    <property type="evidence" value="ECO:0000314"/>
    <property type="project" value="MGI"/>
</dbReference>
<dbReference type="GO" id="GO:0030509">
    <property type="term" value="P:BMP signaling pathway"/>
    <property type="evidence" value="ECO:0000315"/>
    <property type="project" value="MGI"/>
</dbReference>
<dbReference type="GO" id="GO:2000562">
    <property type="term" value="P:negative regulation of CD4-positive, alpha-beta T cell proliferation"/>
    <property type="evidence" value="ECO:0000314"/>
    <property type="project" value="MGI"/>
</dbReference>
<dbReference type="GO" id="GO:0002725">
    <property type="term" value="P:negative regulation of T cell cytokine production"/>
    <property type="evidence" value="ECO:0000314"/>
    <property type="project" value="MGI"/>
</dbReference>
<dbReference type="GO" id="GO:0030513">
    <property type="term" value="P:positive regulation of BMP signaling pathway"/>
    <property type="evidence" value="ECO:0000315"/>
    <property type="project" value="MGI"/>
</dbReference>
<dbReference type="GO" id="GO:2000738">
    <property type="term" value="P:positive regulation of stem cell differentiation"/>
    <property type="evidence" value="ECO:0000316"/>
    <property type="project" value="MGI"/>
</dbReference>
<dbReference type="GO" id="GO:0048863">
    <property type="term" value="P:stem cell differentiation"/>
    <property type="evidence" value="ECO:0000315"/>
    <property type="project" value="MGI"/>
</dbReference>
<dbReference type="CDD" id="cd20980">
    <property type="entry name" value="IgV_VISTA"/>
    <property type="match status" value="1"/>
</dbReference>
<dbReference type="Gene3D" id="2.60.40.10">
    <property type="entry name" value="Immunoglobulins"/>
    <property type="match status" value="1"/>
</dbReference>
<dbReference type="InterPro" id="IPR007110">
    <property type="entry name" value="Ig-like_dom"/>
</dbReference>
<dbReference type="InterPro" id="IPR036179">
    <property type="entry name" value="Ig-like_dom_sf"/>
</dbReference>
<dbReference type="InterPro" id="IPR013783">
    <property type="entry name" value="Ig-like_fold"/>
</dbReference>
<dbReference type="InterPro" id="IPR003599">
    <property type="entry name" value="Ig_sub"/>
</dbReference>
<dbReference type="InterPro" id="IPR013106">
    <property type="entry name" value="Ig_V-set"/>
</dbReference>
<dbReference type="InterPro" id="IPR042473">
    <property type="entry name" value="VISTA"/>
</dbReference>
<dbReference type="PANTHER" id="PTHR44819">
    <property type="entry name" value="V-TYPE IMMUNOGLOBULIN DOMAIN-CONTAINING SUPPRESSOR OF T-CELL ACTIVATION"/>
    <property type="match status" value="1"/>
</dbReference>
<dbReference type="PANTHER" id="PTHR44819:SF1">
    <property type="entry name" value="V-TYPE IMMUNOGLOBULIN DOMAIN-CONTAINING SUPPRESSOR OF T-CELL ACTIVATION"/>
    <property type="match status" value="1"/>
</dbReference>
<dbReference type="Pfam" id="PF07686">
    <property type="entry name" value="V-set"/>
    <property type="match status" value="1"/>
</dbReference>
<dbReference type="SMART" id="SM00409">
    <property type="entry name" value="IG"/>
    <property type="match status" value="1"/>
</dbReference>
<dbReference type="SUPFAM" id="SSF48726">
    <property type="entry name" value="Immunoglobulin"/>
    <property type="match status" value="1"/>
</dbReference>
<dbReference type="PROSITE" id="PS50835">
    <property type="entry name" value="IG_LIKE"/>
    <property type="match status" value="1"/>
</dbReference>
<keyword id="KW-1003">Cell membrane</keyword>
<keyword id="KW-1015">Disulfide bond</keyword>
<keyword id="KW-0325">Glycoprotein</keyword>
<keyword id="KW-0393">Immunoglobulin domain</keyword>
<keyword id="KW-0472">Membrane</keyword>
<keyword id="KW-0597">Phosphoprotein</keyword>
<keyword id="KW-0675">Receptor</keyword>
<keyword id="KW-1185">Reference proteome</keyword>
<keyword id="KW-0732">Signal</keyword>
<keyword id="KW-0812">Transmembrane</keyword>
<keyword id="KW-1133">Transmembrane helix</keyword>
<feature type="signal peptide" evidence="3">
    <location>
        <begin position="1"/>
        <end position="32"/>
    </location>
</feature>
<feature type="chain" id="PRO_0000014766" description="V-type immunoglobulin domain-containing suppressor of T-cell activation">
    <location>
        <begin position="33"/>
        <end position="308"/>
    </location>
</feature>
<feature type="topological domain" description="Extracellular" evidence="6">
    <location>
        <begin position="33"/>
        <end position="191"/>
    </location>
</feature>
<feature type="transmembrane region" description="Helical" evidence="3">
    <location>
        <begin position="192"/>
        <end position="212"/>
    </location>
</feature>
<feature type="topological domain" description="Cytoplasmic" evidence="14">
    <location>
        <begin position="213"/>
        <end position="308"/>
    </location>
</feature>
<feature type="domain" description="Ig-like V-type" evidence="4">
    <location>
        <begin position="33"/>
        <end position="167"/>
    </location>
</feature>
<feature type="region of interest" description="Disordered" evidence="5">
    <location>
        <begin position="230"/>
        <end position="308"/>
    </location>
</feature>
<feature type="modified residue" description="Phosphoserine" evidence="2">
    <location>
        <position position="232"/>
    </location>
</feature>
<feature type="glycosylation site" description="N-linked (GlcNAc...) asparagine" evidence="3">
    <location>
        <position position="49"/>
    </location>
</feature>
<feature type="glycosylation site" description="N-linked (GlcNAc...) asparagine" evidence="3">
    <location>
        <position position="91"/>
    </location>
</feature>
<feature type="glycosylation site" description="N-linked (GlcNAc...) asparagine" evidence="3">
    <location>
        <position position="127"/>
    </location>
</feature>
<feature type="disulfide bond" evidence="4">
    <location>
        <begin position="54"/>
        <end position="145"/>
    </location>
</feature>
<feature type="sequence conflict" description="In Ref. 1; BAC27847 and 5; ABO15002." evidence="14" ref="1 5">
    <original>M</original>
    <variation>I</variation>
    <location>
        <position position="82"/>
    </location>
</feature>
<feature type="sequence conflict" description="In Ref. 1; BAB29455/BAC26981/BAC27847/BAC37735, 3; AAH03967 and 5; ABO15002." evidence="14" ref="1 3 5">
    <original>S</original>
    <variation>SS</variation>
    <location>
        <position position="232"/>
    </location>
</feature>
<accession>Q9D659</accession>
<accession>A3RLQ7</accession>
<accession>E9PUF5</accession>
<accession>Q6KAT9</accession>
<evidence type="ECO:0000250" key="1"/>
<evidence type="ECO:0000250" key="2">
    <source>
        <dbReference type="UniProtKB" id="Q9H7M9"/>
    </source>
</evidence>
<evidence type="ECO:0000255" key="3"/>
<evidence type="ECO:0000255" key="4">
    <source>
        <dbReference type="PROSITE-ProRule" id="PRU00114"/>
    </source>
</evidence>
<evidence type="ECO:0000256" key="5">
    <source>
        <dbReference type="SAM" id="MobiDB-lite"/>
    </source>
</evidence>
<evidence type="ECO:0000269" key="6">
    <source>
    </source>
</evidence>
<evidence type="ECO:0000269" key="7">
    <source>
    </source>
</evidence>
<evidence type="ECO:0000269" key="8">
    <source>
    </source>
</evidence>
<evidence type="ECO:0000269" key="9">
    <source>
    </source>
</evidence>
<evidence type="ECO:0000269" key="10">
    <source>
    </source>
</evidence>
<evidence type="ECO:0000303" key="11">
    <source>
    </source>
</evidence>
<evidence type="ECO:0000303" key="12">
    <source>
    </source>
</evidence>
<evidence type="ECO:0000303" key="13">
    <source>
    </source>
</evidence>
<evidence type="ECO:0000305" key="14"/>
<evidence type="ECO:0000312" key="15">
    <source>
        <dbReference type="EMBL" id="ABO15002.1"/>
    </source>
</evidence>
<evidence type="ECO:0000312" key="16">
    <source>
        <dbReference type="MGI" id="MGI:1921298"/>
    </source>
</evidence>
<protein>
    <recommendedName>
        <fullName evidence="12">V-type immunoglobulin domain-containing suppressor of T-cell activation</fullName>
    </recommendedName>
    <alternativeName>
        <fullName evidence="2">Platelet receptor Gi24</fullName>
    </alternativeName>
    <alternativeName>
        <fullName evidence="16">V-set domain-containing immunoregulatory receptor</fullName>
    </alternativeName>
    <alternativeName>
        <fullName evidence="16">V-set immunoregulatory receptor</fullName>
    </alternativeName>
</protein>
<reference key="1">
    <citation type="journal article" date="2005" name="Science">
        <title>The transcriptional landscape of the mammalian genome.</title>
        <authorList>
            <person name="Carninci P."/>
            <person name="Kasukawa T."/>
            <person name="Katayama S."/>
            <person name="Gough J."/>
            <person name="Frith M.C."/>
            <person name="Maeda N."/>
            <person name="Oyama R."/>
            <person name="Ravasi T."/>
            <person name="Lenhard B."/>
            <person name="Wells C."/>
            <person name="Kodzius R."/>
            <person name="Shimokawa K."/>
            <person name="Bajic V.B."/>
            <person name="Brenner S.E."/>
            <person name="Batalov S."/>
            <person name="Forrest A.R."/>
            <person name="Zavolan M."/>
            <person name="Davis M.J."/>
            <person name="Wilming L.G."/>
            <person name="Aidinis V."/>
            <person name="Allen J.E."/>
            <person name="Ambesi-Impiombato A."/>
            <person name="Apweiler R."/>
            <person name="Aturaliya R.N."/>
            <person name="Bailey T.L."/>
            <person name="Bansal M."/>
            <person name="Baxter L."/>
            <person name="Beisel K.W."/>
            <person name="Bersano T."/>
            <person name="Bono H."/>
            <person name="Chalk A.M."/>
            <person name="Chiu K.P."/>
            <person name="Choudhary V."/>
            <person name="Christoffels A."/>
            <person name="Clutterbuck D.R."/>
            <person name="Crowe M.L."/>
            <person name="Dalla E."/>
            <person name="Dalrymple B.P."/>
            <person name="de Bono B."/>
            <person name="Della Gatta G."/>
            <person name="di Bernardo D."/>
            <person name="Down T."/>
            <person name="Engstrom P."/>
            <person name="Fagiolini M."/>
            <person name="Faulkner G."/>
            <person name="Fletcher C.F."/>
            <person name="Fukushima T."/>
            <person name="Furuno M."/>
            <person name="Futaki S."/>
            <person name="Gariboldi M."/>
            <person name="Georgii-Hemming P."/>
            <person name="Gingeras T.R."/>
            <person name="Gojobori T."/>
            <person name="Green R.E."/>
            <person name="Gustincich S."/>
            <person name="Harbers M."/>
            <person name="Hayashi Y."/>
            <person name="Hensch T.K."/>
            <person name="Hirokawa N."/>
            <person name="Hill D."/>
            <person name="Huminiecki L."/>
            <person name="Iacono M."/>
            <person name="Ikeo K."/>
            <person name="Iwama A."/>
            <person name="Ishikawa T."/>
            <person name="Jakt M."/>
            <person name="Kanapin A."/>
            <person name="Katoh M."/>
            <person name="Kawasawa Y."/>
            <person name="Kelso J."/>
            <person name="Kitamura H."/>
            <person name="Kitano H."/>
            <person name="Kollias G."/>
            <person name="Krishnan S.P."/>
            <person name="Kruger A."/>
            <person name="Kummerfeld S.K."/>
            <person name="Kurochkin I.V."/>
            <person name="Lareau L.F."/>
            <person name="Lazarevic D."/>
            <person name="Lipovich L."/>
            <person name="Liu J."/>
            <person name="Liuni S."/>
            <person name="McWilliam S."/>
            <person name="Madan Babu M."/>
            <person name="Madera M."/>
            <person name="Marchionni L."/>
            <person name="Matsuda H."/>
            <person name="Matsuzawa S."/>
            <person name="Miki H."/>
            <person name="Mignone F."/>
            <person name="Miyake S."/>
            <person name="Morris K."/>
            <person name="Mottagui-Tabar S."/>
            <person name="Mulder N."/>
            <person name="Nakano N."/>
            <person name="Nakauchi H."/>
            <person name="Ng P."/>
            <person name="Nilsson R."/>
            <person name="Nishiguchi S."/>
            <person name="Nishikawa S."/>
            <person name="Nori F."/>
            <person name="Ohara O."/>
            <person name="Okazaki Y."/>
            <person name="Orlando V."/>
            <person name="Pang K.C."/>
            <person name="Pavan W.J."/>
            <person name="Pavesi G."/>
            <person name="Pesole G."/>
            <person name="Petrovsky N."/>
            <person name="Piazza S."/>
            <person name="Reed J."/>
            <person name="Reid J.F."/>
            <person name="Ring B.Z."/>
            <person name="Ringwald M."/>
            <person name="Rost B."/>
            <person name="Ruan Y."/>
            <person name="Salzberg S.L."/>
            <person name="Sandelin A."/>
            <person name="Schneider C."/>
            <person name="Schoenbach C."/>
            <person name="Sekiguchi K."/>
            <person name="Semple C.A."/>
            <person name="Seno S."/>
            <person name="Sessa L."/>
            <person name="Sheng Y."/>
            <person name="Shibata Y."/>
            <person name="Shimada H."/>
            <person name="Shimada K."/>
            <person name="Silva D."/>
            <person name="Sinclair B."/>
            <person name="Sperling S."/>
            <person name="Stupka E."/>
            <person name="Sugiura K."/>
            <person name="Sultana R."/>
            <person name="Takenaka Y."/>
            <person name="Taki K."/>
            <person name="Tammoja K."/>
            <person name="Tan S.L."/>
            <person name="Tang S."/>
            <person name="Taylor M.S."/>
            <person name="Tegner J."/>
            <person name="Teichmann S.A."/>
            <person name="Ueda H.R."/>
            <person name="van Nimwegen E."/>
            <person name="Verardo R."/>
            <person name="Wei C.L."/>
            <person name="Yagi K."/>
            <person name="Yamanishi H."/>
            <person name="Zabarovsky E."/>
            <person name="Zhu S."/>
            <person name="Zimmer A."/>
            <person name="Hide W."/>
            <person name="Bult C."/>
            <person name="Grimmond S.M."/>
            <person name="Teasdale R.D."/>
            <person name="Liu E.T."/>
            <person name="Brusic V."/>
            <person name="Quackenbush J."/>
            <person name="Wahlestedt C."/>
            <person name="Mattick J.S."/>
            <person name="Hume D.A."/>
            <person name="Kai C."/>
            <person name="Sasaki D."/>
            <person name="Tomaru Y."/>
            <person name="Fukuda S."/>
            <person name="Kanamori-Katayama M."/>
            <person name="Suzuki M."/>
            <person name="Aoki J."/>
            <person name="Arakawa T."/>
            <person name="Iida J."/>
            <person name="Imamura K."/>
            <person name="Itoh M."/>
            <person name="Kato T."/>
            <person name="Kawaji H."/>
            <person name="Kawagashira N."/>
            <person name="Kawashima T."/>
            <person name="Kojima M."/>
            <person name="Kondo S."/>
            <person name="Konno H."/>
            <person name="Nakano K."/>
            <person name="Ninomiya N."/>
            <person name="Nishio T."/>
            <person name="Okada M."/>
            <person name="Plessy C."/>
            <person name="Shibata K."/>
            <person name="Shiraki T."/>
            <person name="Suzuki S."/>
            <person name="Tagami M."/>
            <person name="Waki K."/>
            <person name="Watahiki A."/>
            <person name="Okamura-Oho Y."/>
            <person name="Suzuki H."/>
            <person name="Kawai J."/>
            <person name="Hayashizaki Y."/>
        </authorList>
    </citation>
    <scope>NUCLEOTIDE SEQUENCE [LARGE SCALE MRNA]</scope>
    <source>
        <strain>C57BL/6J</strain>
        <tissue>Olfactory bulb</tissue>
        <tissue>Pituitary</tissue>
        <tissue>Skin</tissue>
        <tissue>Thymus</tissue>
    </source>
</reference>
<reference key="2">
    <citation type="journal article" date="2004" name="DNA Res.">
        <title>Prediction of the coding sequences of mouse homologues of FLJ genes: the complete nucleotide sequences of 110 mouse FLJ-homologous cDNAs identified by screening of terminal sequences of cDNA clones randomly sampled from size-fractionated libraries.</title>
        <authorList>
            <person name="Okazaki N."/>
            <person name="Kikuno R."/>
            <person name="Ohara R."/>
            <person name="Inamoto S."/>
            <person name="Koseki H."/>
            <person name="Hiraoka S."/>
            <person name="Saga Y."/>
            <person name="Kitamura H."/>
            <person name="Nakagawa T."/>
            <person name="Nagase T."/>
            <person name="Ohara O."/>
            <person name="Koga H."/>
        </authorList>
    </citation>
    <scope>NUCLEOTIDE SEQUENCE [LARGE SCALE MRNA]</scope>
</reference>
<reference key="3">
    <citation type="journal article" date="2004" name="Genome Res.">
        <title>The status, quality, and expansion of the NIH full-length cDNA project: the Mammalian Gene Collection (MGC).</title>
        <authorList>
            <consortium name="The MGC Project Team"/>
        </authorList>
    </citation>
    <scope>NUCLEOTIDE SEQUENCE [LARGE SCALE MRNA]</scope>
    <source>
        <strain>FVB/N</strain>
        <tissue>Mammary tumor</tissue>
    </source>
</reference>
<reference key="4">
    <citation type="journal article" date="2009" name="PLoS Biol.">
        <title>Lineage-specific biology revealed by a finished genome assembly of the mouse.</title>
        <authorList>
            <person name="Church D.M."/>
            <person name="Goodstadt L."/>
            <person name="Hillier L.W."/>
            <person name="Zody M.C."/>
            <person name="Goldstein S."/>
            <person name="She X."/>
            <person name="Bult C.J."/>
            <person name="Agarwala R."/>
            <person name="Cherry J.L."/>
            <person name="DiCuccio M."/>
            <person name="Hlavina W."/>
            <person name="Kapustin Y."/>
            <person name="Meric P."/>
            <person name="Maglott D."/>
            <person name="Birtle Z."/>
            <person name="Marques A.C."/>
            <person name="Graves T."/>
            <person name="Zhou S."/>
            <person name="Teague B."/>
            <person name="Potamousis K."/>
            <person name="Churas C."/>
            <person name="Place M."/>
            <person name="Herschleb J."/>
            <person name="Runnheim R."/>
            <person name="Forrest D."/>
            <person name="Amos-Landgraf J."/>
            <person name="Schwartz D.C."/>
            <person name="Cheng Z."/>
            <person name="Lindblad-Toh K."/>
            <person name="Eichler E.E."/>
            <person name="Ponting C.P."/>
        </authorList>
    </citation>
    <scope>NUCLEOTIDE SEQUENCE [LARGE SCALE GENOMIC DNA]</scope>
    <source>
        <strain>C57BL/6J</strain>
    </source>
</reference>
<reference key="5">
    <citation type="submission" date="2007-02" db="EMBL/GenBank/DDBJ databases">
        <title>Mus musculus receptor Gi24 (murine Gi24R).</title>
        <authorList>
            <person name="Sachs U.J.H."/>
            <person name="Berghoefer H."/>
            <person name="Santoso S."/>
        </authorList>
    </citation>
    <scope>NUCLEOTIDE SEQUENCE [MRNA] OF 1-277</scope>
    <source>
        <strain evidence="15">NMRI</strain>
        <tissue evidence="15">Bone marrow</tissue>
    </source>
</reference>
<reference key="6">
    <citation type="journal article" date="2010" name="J. Biol. Chem.">
        <title>Differentiation of embryonic stem cells 1 (Dies1) is a component of bone morphogenetic protein 4 (BMP4) signaling pathway required for proper differentiation of mouse embryonic stem cells.</title>
        <authorList>
            <person name="Aloia L."/>
            <person name="Parisi S."/>
            <person name="Fusco L."/>
            <person name="Pastore L."/>
            <person name="Russo T."/>
        </authorList>
    </citation>
    <scope>FUNCTION</scope>
    <scope>SUBCELLULAR LOCATION</scope>
    <scope>TOPOLOGY</scope>
    <scope>GLYCOSYLATION</scope>
</reference>
<reference key="7">
    <citation type="journal article" date="2011" name="J. Exp. Med.">
        <title>VISTA, a novel mouse Ig superfamily ligand that negatively regulates T cell responses.</title>
        <authorList>
            <person name="Wang L."/>
            <person name="Rubinstein R."/>
            <person name="Lines J.L."/>
            <person name="Wasiuk A."/>
            <person name="Ahonen C."/>
            <person name="Guo Y."/>
            <person name="Lu L.F."/>
            <person name="Gondek D."/>
            <person name="Wang Y."/>
            <person name="Fava R.A."/>
            <person name="Fiser A."/>
            <person name="Almo S."/>
            <person name="Noelle R.J."/>
        </authorList>
    </citation>
    <scope>FUNCTION</scope>
    <scope>TISSUE SPECIFICITY</scope>
</reference>
<reference key="8">
    <citation type="journal article" date="2011" name="J. Immunol.">
        <title>Cutting edge: A monoclonal antibody specific for the programmed death-1 homolog prevents graft-versus-host disease in mouse models.</title>
        <authorList>
            <person name="Flies D.B."/>
            <person name="Wang S."/>
            <person name="Xu H."/>
            <person name="Chen L."/>
        </authorList>
    </citation>
    <scope>SUBCELLULAR LOCATION</scope>
    <scope>TISSUE SPECIFICITY</scope>
    <scope>DEVELOPMENTAL STAGE</scope>
    <scope>INDUCTION</scope>
</reference>
<reference key="9">
    <citation type="journal article" date="2014" name="J. Clin. Invest.">
        <title>Coinhibitory receptor PD-1H preferentially suppresses CD4[+] T cell-mediated immunity.</title>
        <authorList>
            <person name="Flies D.B."/>
            <person name="Han X."/>
            <person name="Higuchi T."/>
            <person name="Zheng L."/>
            <person name="Sun J."/>
            <person name="Ye J.J."/>
            <person name="Chen L."/>
        </authorList>
    </citation>
    <scope>FUNCTION</scope>
    <scope>DISRUPTION PHENOTYPE</scope>
</reference>
<reference key="10">
    <citation type="journal article" date="2014" name="Proc. Natl. Acad. Sci. U.S.A.">
        <title>Disruption of the immune-checkpoint VISTA gene imparts a proinflammatory phenotype with predisposition to the development of autoimmunity.</title>
        <authorList>
            <person name="Wang L."/>
            <person name="Le Mercier I."/>
            <person name="Putra J."/>
            <person name="Chen W."/>
            <person name="Liu J."/>
            <person name="Schenk A.D."/>
            <person name="Nowak E.C."/>
            <person name="Suriawinata A.A."/>
            <person name="Li J."/>
            <person name="Noelle R.J."/>
        </authorList>
    </citation>
    <scope>FUNCTION</scope>
    <scope>DISRUPTION PHENOTYPE</scope>
</reference>
<proteinExistence type="evidence at protein level"/>
<name>VISTA_MOUSE</name>
<comment type="function">
    <text evidence="2 6 7 9 10">Immunoregulatory receptor which inhibits the T-cell response (PubMed:21383057, PubMed:24743150, PubMed:25267631). May promote differentiation of embryonic stem cells, by inhibiting BMP4 signaling (PubMed:20042595). May stimulate MMP14-mediated MMP2 activation (By similarity).</text>
</comment>
<comment type="subcellular location">
    <subcellularLocation>
        <location evidence="6 8">Cell membrane</location>
        <topology evidence="3">Single-pass type I membrane protein</topology>
    </subcellularLocation>
</comment>
<comment type="tissue specificity">
    <text evidence="7 8">Expressed in spleen, thymus, bone marrow, lymph node, and in T-cells within the lamina propria of the small intestine (PubMed:21768399). Detected on CD4+ and CD8+ T-cells, bone marrow-derived dendritic cells (BMDCs), peritoneal macrophages, neutrophils, and natural killer (NK) cells (PubMed:21768399). In spleen and lymph nodes, highly expressed on CD4+ T-cell populations, and at lower levels on CD8+ T-cells (PubMed:21383057). In thymus, has low expression on CD4+ cells and CD8+ cells, and not detected on CD4+CD8+ cells (PubMed:21383057). Expressed in splenic and peritoneal CD11b cells (PubMed:21383057). Not detected in most B cells and NK cells (at protein level) (PubMed:21383057). Also detected at lower levels in non-hematopoeitic tissues such as heart, brain, lung, kidney, muscle, ovary, and testis (PubMed:21383057, PubMed:21768399).</text>
</comment>
<comment type="developmental stage">
    <text evidence="8">Detected in 7-day and 17-day embryos.</text>
</comment>
<comment type="induction">
    <text evidence="8">Up-regulated by phorbol 12-myristate 13-acetate (PMA) and the cytokine IFNG.</text>
</comment>
<comment type="PTM">
    <text evidence="1">At the cell surface, may be cleaved by MMP14.</text>
</comment>
<comment type="PTM">
    <text evidence="6">N-glycosylated.</text>
</comment>
<comment type="disruption phenotype">
    <text evidence="9 10">Viable and fertile (PubMed:24743150, PubMed:25267631). At birth, lymphocyte populations in bone marrow, spleen and lymph nodes appear to be normal (PubMed:24743150, PubMed:25267631). Frequencies of activated peripheral T-cells are increased in older animals (PubMed:24743150, PubMed:25267631). Levels of the inflammatory cytokines CCL11, CXCL10, CCL2 and CXCL9 are significantly increased (PubMed:25267631). Tissues show signs of chronic inflammation, however this does not progress to overt autoimmune disease (PubMed:25267631).</text>
</comment>
<comment type="sequence caution" evidence="14">
    <conflict type="frameshift">
        <sequence resource="EMBL-CDS" id="ABO15002"/>
    </conflict>
</comment>
<comment type="sequence caution" evidence="14">
    <conflict type="frameshift">
        <sequence resource="EMBL-CDS" id="BAC27847"/>
    </conflict>
</comment>
<comment type="sequence caution" evidence="14">
    <conflict type="erroneous initiation">
        <sequence resource="EMBL-CDS" id="BAD21368"/>
    </conflict>
    <text>Extended N-terminus.</text>
</comment>
<gene>
    <name evidence="16" type="primary">Vsir</name>
    <name evidence="11" type="synonym">Dies1</name>
    <name evidence="13" type="synonym">PD-1H</name>
    <name evidence="12" type="synonym">VISTA</name>
</gene>